<feature type="chain" id="PRO_0000290854" description="Small ribosomal subunit protein uS8">
    <location>
        <begin position="1"/>
        <end position="132"/>
    </location>
</feature>
<organism>
    <name type="scientific">Levilactobacillus brevis (strain ATCC 367 / BCRC 12310 / CIP 105137 / JCM 1170 / LMG 11437 / NCIMB 947 / NCTC 947)</name>
    <name type="common">Lactobacillus brevis</name>
    <dbReference type="NCBI Taxonomy" id="387344"/>
    <lineage>
        <taxon>Bacteria</taxon>
        <taxon>Bacillati</taxon>
        <taxon>Bacillota</taxon>
        <taxon>Bacilli</taxon>
        <taxon>Lactobacillales</taxon>
        <taxon>Lactobacillaceae</taxon>
        <taxon>Levilactobacillus</taxon>
    </lineage>
</organism>
<keyword id="KW-1185">Reference proteome</keyword>
<keyword id="KW-0687">Ribonucleoprotein</keyword>
<keyword id="KW-0689">Ribosomal protein</keyword>
<keyword id="KW-0694">RNA-binding</keyword>
<keyword id="KW-0699">rRNA-binding</keyword>
<protein>
    <recommendedName>
        <fullName evidence="1">Small ribosomal subunit protein uS8</fullName>
    </recommendedName>
    <alternativeName>
        <fullName evidence="2">30S ribosomal protein S8</fullName>
    </alternativeName>
</protein>
<gene>
    <name evidence="1" type="primary">rpsH</name>
    <name type="ordered locus">LVIS_1676</name>
</gene>
<comment type="function">
    <text evidence="1">One of the primary rRNA binding proteins, it binds directly to 16S rRNA central domain where it helps coordinate assembly of the platform of the 30S subunit.</text>
</comment>
<comment type="subunit">
    <text evidence="1">Part of the 30S ribosomal subunit. Contacts proteins S5 and S12.</text>
</comment>
<comment type="similarity">
    <text evidence="1">Belongs to the universal ribosomal protein uS8 family.</text>
</comment>
<proteinExistence type="inferred from homology"/>
<accession>Q03PX1</accession>
<dbReference type="EMBL" id="CP000416">
    <property type="protein sequence ID" value="ABJ64751.1"/>
    <property type="molecule type" value="Genomic_DNA"/>
</dbReference>
<dbReference type="RefSeq" id="WP_011668485.1">
    <property type="nucleotide sequence ID" value="NC_008497.1"/>
</dbReference>
<dbReference type="SMR" id="Q03PX1"/>
<dbReference type="STRING" id="387344.LVIS_1676"/>
<dbReference type="GeneID" id="56993537"/>
<dbReference type="KEGG" id="lbr:LVIS_1676"/>
<dbReference type="eggNOG" id="COG0096">
    <property type="taxonomic scope" value="Bacteria"/>
</dbReference>
<dbReference type="HOGENOM" id="CLU_098428_0_2_9"/>
<dbReference type="Proteomes" id="UP000001652">
    <property type="component" value="Chromosome"/>
</dbReference>
<dbReference type="GO" id="GO:1990904">
    <property type="term" value="C:ribonucleoprotein complex"/>
    <property type="evidence" value="ECO:0007669"/>
    <property type="project" value="UniProtKB-KW"/>
</dbReference>
<dbReference type="GO" id="GO:0005840">
    <property type="term" value="C:ribosome"/>
    <property type="evidence" value="ECO:0007669"/>
    <property type="project" value="UniProtKB-KW"/>
</dbReference>
<dbReference type="GO" id="GO:0019843">
    <property type="term" value="F:rRNA binding"/>
    <property type="evidence" value="ECO:0007669"/>
    <property type="project" value="UniProtKB-UniRule"/>
</dbReference>
<dbReference type="GO" id="GO:0003735">
    <property type="term" value="F:structural constituent of ribosome"/>
    <property type="evidence" value="ECO:0007669"/>
    <property type="project" value="InterPro"/>
</dbReference>
<dbReference type="GO" id="GO:0006412">
    <property type="term" value="P:translation"/>
    <property type="evidence" value="ECO:0007669"/>
    <property type="project" value="UniProtKB-UniRule"/>
</dbReference>
<dbReference type="FunFam" id="3.30.1370.30:FF:000002">
    <property type="entry name" value="30S ribosomal protein S8"/>
    <property type="match status" value="1"/>
</dbReference>
<dbReference type="FunFam" id="3.30.1490.10:FF:000001">
    <property type="entry name" value="30S ribosomal protein S8"/>
    <property type="match status" value="1"/>
</dbReference>
<dbReference type="Gene3D" id="3.30.1370.30">
    <property type="match status" value="1"/>
</dbReference>
<dbReference type="Gene3D" id="3.30.1490.10">
    <property type="match status" value="1"/>
</dbReference>
<dbReference type="HAMAP" id="MF_01302_B">
    <property type="entry name" value="Ribosomal_uS8_B"/>
    <property type="match status" value="1"/>
</dbReference>
<dbReference type="InterPro" id="IPR000630">
    <property type="entry name" value="Ribosomal_uS8"/>
</dbReference>
<dbReference type="InterPro" id="IPR047863">
    <property type="entry name" value="Ribosomal_uS8_CS"/>
</dbReference>
<dbReference type="InterPro" id="IPR035987">
    <property type="entry name" value="Ribosomal_uS8_sf"/>
</dbReference>
<dbReference type="NCBIfam" id="NF001109">
    <property type="entry name" value="PRK00136.1"/>
    <property type="match status" value="1"/>
</dbReference>
<dbReference type="PANTHER" id="PTHR11758">
    <property type="entry name" value="40S RIBOSOMAL PROTEIN S15A"/>
    <property type="match status" value="1"/>
</dbReference>
<dbReference type="Pfam" id="PF00410">
    <property type="entry name" value="Ribosomal_S8"/>
    <property type="match status" value="1"/>
</dbReference>
<dbReference type="SUPFAM" id="SSF56047">
    <property type="entry name" value="Ribosomal protein S8"/>
    <property type="match status" value="1"/>
</dbReference>
<dbReference type="PROSITE" id="PS00053">
    <property type="entry name" value="RIBOSOMAL_S8"/>
    <property type="match status" value="1"/>
</dbReference>
<name>RS8_LEVBA</name>
<evidence type="ECO:0000255" key="1">
    <source>
        <dbReference type="HAMAP-Rule" id="MF_01302"/>
    </source>
</evidence>
<evidence type="ECO:0000305" key="2"/>
<sequence>MSMTDPIADFLTRIRNANMVRHESLEVPASKIKRDIAEILKREGFIRNVEYIDDDKQGIIRVFLKYGKDNQRVISGLKRISKPGLRSYVKADAVPKVLNGLGIAIISTSEGVVTDKEARAKKIGGEVLAYVW</sequence>
<reference key="1">
    <citation type="journal article" date="2006" name="Proc. Natl. Acad. Sci. U.S.A.">
        <title>Comparative genomics of the lactic acid bacteria.</title>
        <authorList>
            <person name="Makarova K.S."/>
            <person name="Slesarev A."/>
            <person name="Wolf Y.I."/>
            <person name="Sorokin A."/>
            <person name="Mirkin B."/>
            <person name="Koonin E.V."/>
            <person name="Pavlov A."/>
            <person name="Pavlova N."/>
            <person name="Karamychev V."/>
            <person name="Polouchine N."/>
            <person name="Shakhova V."/>
            <person name="Grigoriev I."/>
            <person name="Lou Y."/>
            <person name="Rohksar D."/>
            <person name="Lucas S."/>
            <person name="Huang K."/>
            <person name="Goodstein D.M."/>
            <person name="Hawkins T."/>
            <person name="Plengvidhya V."/>
            <person name="Welker D."/>
            <person name="Hughes J."/>
            <person name="Goh Y."/>
            <person name="Benson A."/>
            <person name="Baldwin K."/>
            <person name="Lee J.-H."/>
            <person name="Diaz-Muniz I."/>
            <person name="Dosti B."/>
            <person name="Smeianov V."/>
            <person name="Wechter W."/>
            <person name="Barabote R."/>
            <person name="Lorca G."/>
            <person name="Altermann E."/>
            <person name="Barrangou R."/>
            <person name="Ganesan B."/>
            <person name="Xie Y."/>
            <person name="Rawsthorne H."/>
            <person name="Tamir D."/>
            <person name="Parker C."/>
            <person name="Breidt F."/>
            <person name="Broadbent J.R."/>
            <person name="Hutkins R."/>
            <person name="O'Sullivan D."/>
            <person name="Steele J."/>
            <person name="Unlu G."/>
            <person name="Saier M.H. Jr."/>
            <person name="Klaenhammer T."/>
            <person name="Richardson P."/>
            <person name="Kozyavkin S."/>
            <person name="Weimer B.C."/>
            <person name="Mills D.A."/>
        </authorList>
    </citation>
    <scope>NUCLEOTIDE SEQUENCE [LARGE SCALE GENOMIC DNA]</scope>
    <source>
        <strain>ATCC 367 / BCRC 12310 / CIP 105137 / JCM 1170 / LMG 11437 / NCIMB 947 / NCTC 947</strain>
    </source>
</reference>